<evidence type="ECO:0000255" key="1"/>
<evidence type="ECO:0000305" key="2"/>
<organism>
    <name type="scientific">African swine fever virus (isolate Tick/Malawi/Lil 20-1/1983)</name>
    <name type="common">ASFV</name>
    <dbReference type="NCBI Taxonomy" id="10500"/>
    <lineage>
        <taxon>Viruses</taxon>
        <taxon>Varidnaviria</taxon>
        <taxon>Bamfordvirae</taxon>
        <taxon>Nucleocytoviricota</taxon>
        <taxon>Pokkesviricetes</taxon>
        <taxon>Asfuvirales</taxon>
        <taxon>Asfarviridae</taxon>
        <taxon>Asfivirus</taxon>
        <taxon>African swine fever virus</taxon>
    </lineage>
</organism>
<sequence>MDIKRALILFLLFLVVLSNAFVDYIISNFNHAVTCRKPTYFGIVLQGIFLVILFSIVDYLINENIL</sequence>
<gene>
    <name type="ordered locus">Mal-095</name>
</gene>
<proteinExistence type="inferred from homology"/>
<protein>
    <recommendedName>
        <fullName>Transmembrane protein B66L</fullName>
        <shortName>pB66L</shortName>
    </recommendedName>
</protein>
<name>VFB66_ASFM2</name>
<organismHost>
    <name type="scientific">Ornithodoros</name>
    <name type="common">relapsing fever ticks</name>
    <dbReference type="NCBI Taxonomy" id="6937"/>
</organismHost>
<organismHost>
    <name type="scientific">Phacochoerus aethiopicus</name>
    <name type="common">Warthog</name>
    <dbReference type="NCBI Taxonomy" id="85517"/>
</organismHost>
<organismHost>
    <name type="scientific">Phacochoerus africanus</name>
    <name type="common">Warthog</name>
    <dbReference type="NCBI Taxonomy" id="41426"/>
</organismHost>
<organismHost>
    <name type="scientific">Potamochoerus larvatus</name>
    <name type="common">Bushpig</name>
    <dbReference type="NCBI Taxonomy" id="273792"/>
</organismHost>
<organismHost>
    <name type="scientific">Sus scrofa</name>
    <name type="common">Pig</name>
    <dbReference type="NCBI Taxonomy" id="9823"/>
</organismHost>
<reference key="1">
    <citation type="submission" date="2003-03" db="EMBL/GenBank/DDBJ databases">
        <title>African swine fever virus genomes.</title>
        <authorList>
            <person name="Kutish G.F."/>
            <person name="Rock D.L."/>
        </authorList>
    </citation>
    <scope>NUCLEOTIDE SEQUENCE [LARGE SCALE GENOMIC DNA]</scope>
</reference>
<keyword id="KW-1043">Host membrane</keyword>
<keyword id="KW-0472">Membrane</keyword>
<keyword id="KW-0732">Signal</keyword>
<keyword id="KW-0812">Transmembrane</keyword>
<keyword id="KW-1133">Transmembrane helix</keyword>
<dbReference type="EMBL" id="AY261361">
    <property type="status" value="NOT_ANNOTATED_CDS"/>
    <property type="molecule type" value="Genomic_DNA"/>
</dbReference>
<dbReference type="Proteomes" id="UP000000860">
    <property type="component" value="Segment"/>
</dbReference>
<dbReference type="GO" id="GO:0033644">
    <property type="term" value="C:host cell membrane"/>
    <property type="evidence" value="ECO:0007669"/>
    <property type="project" value="UniProtKB-SubCell"/>
</dbReference>
<dbReference type="GO" id="GO:0016020">
    <property type="term" value="C:membrane"/>
    <property type="evidence" value="ECO:0007669"/>
    <property type="project" value="UniProtKB-KW"/>
</dbReference>
<accession>P0CAM1</accession>
<feature type="signal peptide" evidence="1">
    <location>
        <begin position="1"/>
        <end position="20"/>
    </location>
</feature>
<feature type="chain" id="PRO_0000373753" description="Transmembrane protein B66L">
    <location>
        <begin position="21"/>
        <end position="66"/>
    </location>
</feature>
<feature type="topological domain" description="Extracellular" evidence="1">
    <location>
        <begin position="21"/>
        <end position="40"/>
    </location>
</feature>
<feature type="transmembrane region" description="Helical" evidence="1">
    <location>
        <begin position="41"/>
        <end position="61"/>
    </location>
</feature>
<feature type="topological domain" description="Cytoplasmic" evidence="1">
    <location>
        <begin position="62"/>
        <end position="66"/>
    </location>
</feature>
<comment type="subcellular location">
    <subcellularLocation>
        <location evidence="2">Host membrane</location>
        <topology evidence="2">Single-pass type I membrane protein</topology>
    </subcellularLocation>
</comment>
<comment type="similarity">
    <text evidence="2">Belongs to the asfivirus B66L family.</text>
</comment>